<organism>
    <name type="scientific">Brucella abortus (strain 2308)</name>
    <dbReference type="NCBI Taxonomy" id="359391"/>
    <lineage>
        <taxon>Bacteria</taxon>
        <taxon>Pseudomonadati</taxon>
        <taxon>Pseudomonadota</taxon>
        <taxon>Alphaproteobacteria</taxon>
        <taxon>Hyphomicrobiales</taxon>
        <taxon>Brucellaceae</taxon>
        <taxon>Brucella/Ochrobactrum group</taxon>
        <taxon>Brucella</taxon>
    </lineage>
</organism>
<protein>
    <recommendedName>
        <fullName evidence="1">Cysteine--tRNA ligase</fullName>
        <ecNumber evidence="1">6.1.1.16</ecNumber>
    </recommendedName>
    <alternativeName>
        <fullName evidence="1">Cysteinyl-tRNA synthetase</fullName>
        <shortName evidence="1">CysRS</shortName>
    </alternativeName>
</protein>
<dbReference type="EC" id="6.1.1.16" evidence="1"/>
<dbReference type="EMBL" id="AM040264">
    <property type="protein sequence ID" value="CAJ10653.1"/>
    <property type="molecule type" value="Genomic_DNA"/>
</dbReference>
<dbReference type="RefSeq" id="WP_002966736.1">
    <property type="nucleotide sequence ID" value="NZ_KN046823.1"/>
</dbReference>
<dbReference type="SMR" id="Q2YN22"/>
<dbReference type="STRING" id="359391.BAB1_0697"/>
<dbReference type="GeneID" id="93016919"/>
<dbReference type="KEGG" id="bmf:BAB1_0697"/>
<dbReference type="PATRIC" id="fig|359391.11.peg.3009"/>
<dbReference type="HOGENOM" id="CLU_013528_0_1_5"/>
<dbReference type="PhylomeDB" id="Q2YN22"/>
<dbReference type="Proteomes" id="UP000002719">
    <property type="component" value="Chromosome I"/>
</dbReference>
<dbReference type="GO" id="GO:0005829">
    <property type="term" value="C:cytosol"/>
    <property type="evidence" value="ECO:0007669"/>
    <property type="project" value="TreeGrafter"/>
</dbReference>
<dbReference type="GO" id="GO:0005524">
    <property type="term" value="F:ATP binding"/>
    <property type="evidence" value="ECO:0007669"/>
    <property type="project" value="UniProtKB-UniRule"/>
</dbReference>
<dbReference type="GO" id="GO:0004817">
    <property type="term" value="F:cysteine-tRNA ligase activity"/>
    <property type="evidence" value="ECO:0007669"/>
    <property type="project" value="UniProtKB-UniRule"/>
</dbReference>
<dbReference type="GO" id="GO:0008270">
    <property type="term" value="F:zinc ion binding"/>
    <property type="evidence" value="ECO:0007669"/>
    <property type="project" value="UniProtKB-UniRule"/>
</dbReference>
<dbReference type="GO" id="GO:0006423">
    <property type="term" value="P:cysteinyl-tRNA aminoacylation"/>
    <property type="evidence" value="ECO:0007669"/>
    <property type="project" value="UniProtKB-UniRule"/>
</dbReference>
<dbReference type="CDD" id="cd00672">
    <property type="entry name" value="CysRS_core"/>
    <property type="match status" value="1"/>
</dbReference>
<dbReference type="Gene3D" id="1.20.120.1910">
    <property type="entry name" value="Cysteine-tRNA ligase, C-terminal anti-codon recognition domain"/>
    <property type="match status" value="1"/>
</dbReference>
<dbReference type="Gene3D" id="3.40.50.620">
    <property type="entry name" value="HUPs"/>
    <property type="match status" value="1"/>
</dbReference>
<dbReference type="HAMAP" id="MF_00041">
    <property type="entry name" value="Cys_tRNA_synth"/>
    <property type="match status" value="1"/>
</dbReference>
<dbReference type="InterPro" id="IPR015803">
    <property type="entry name" value="Cys-tRNA-ligase"/>
</dbReference>
<dbReference type="InterPro" id="IPR024909">
    <property type="entry name" value="Cys-tRNA/MSH_ligase"/>
</dbReference>
<dbReference type="InterPro" id="IPR014729">
    <property type="entry name" value="Rossmann-like_a/b/a_fold"/>
</dbReference>
<dbReference type="InterPro" id="IPR032678">
    <property type="entry name" value="tRNA-synt_1_cat_dom"/>
</dbReference>
<dbReference type="InterPro" id="IPR009080">
    <property type="entry name" value="tRNAsynth_Ia_anticodon-bd"/>
</dbReference>
<dbReference type="NCBIfam" id="TIGR00435">
    <property type="entry name" value="cysS"/>
    <property type="match status" value="1"/>
</dbReference>
<dbReference type="PANTHER" id="PTHR10890:SF3">
    <property type="entry name" value="CYSTEINE--TRNA LIGASE, CYTOPLASMIC"/>
    <property type="match status" value="1"/>
</dbReference>
<dbReference type="PANTHER" id="PTHR10890">
    <property type="entry name" value="CYSTEINYL-TRNA SYNTHETASE"/>
    <property type="match status" value="1"/>
</dbReference>
<dbReference type="Pfam" id="PF01406">
    <property type="entry name" value="tRNA-synt_1e"/>
    <property type="match status" value="1"/>
</dbReference>
<dbReference type="PRINTS" id="PR00983">
    <property type="entry name" value="TRNASYNTHCYS"/>
</dbReference>
<dbReference type="SUPFAM" id="SSF47323">
    <property type="entry name" value="Anticodon-binding domain of a subclass of class I aminoacyl-tRNA synthetases"/>
    <property type="match status" value="1"/>
</dbReference>
<dbReference type="SUPFAM" id="SSF52374">
    <property type="entry name" value="Nucleotidylyl transferase"/>
    <property type="match status" value="1"/>
</dbReference>
<accession>Q2YN22</accession>
<proteinExistence type="inferred from homology"/>
<evidence type="ECO:0000255" key="1">
    <source>
        <dbReference type="HAMAP-Rule" id="MF_00041"/>
    </source>
</evidence>
<sequence>MPDTTPQLRLYNTLTRTKEAFAPIDAKNVRMYVCGPTVYDFAHIGNARPVIVFDVLFRLLRHVYGAQHVTYARNITDVDDKINARAARDYPDLPFNEAIRKVTESTNAQFQADVTALGNLQPTVQPRATEHMDEMRAMIDRLVQRGVAYVAQDHVLFSPSAMNARKGPRYGALARRSLDEMLAGARVDVASYKRDEMDFVLWKPSKKGEPGWPSPAGIETLGRPGWHIECSAMSMAKLLEPFGGGLKCDDPERNQFDIHGGGIDLVFPHHENEIAQSCCALGTERMANIWMHNGFLQVEGQKMSKSLGNFITIRDVLNDGLPQLGEWGDNTVRDHWAGLAARLSMLQTHYREPINWTAQRLAESADELHRWYGLLRDEGFGAPEKLSHASAVAAALCDDLNSWAAITALRQAFKVRDVAALGEGMALMGLLDPYFVTASDVPIFARADVDASAIAARIAERLNFINAKNWAEADRIRDELLQEGVQLKDSKDPATGERITTWDVVG</sequence>
<name>SYC_BRUA2</name>
<keyword id="KW-0030">Aminoacyl-tRNA synthetase</keyword>
<keyword id="KW-0067">ATP-binding</keyword>
<keyword id="KW-0963">Cytoplasm</keyword>
<keyword id="KW-0436">Ligase</keyword>
<keyword id="KW-0479">Metal-binding</keyword>
<keyword id="KW-0547">Nucleotide-binding</keyword>
<keyword id="KW-0648">Protein biosynthesis</keyword>
<keyword id="KW-1185">Reference proteome</keyword>
<keyword id="KW-0862">Zinc</keyword>
<reference key="1">
    <citation type="journal article" date="2005" name="Infect. Immun.">
        <title>Whole-genome analyses of speciation events in pathogenic Brucellae.</title>
        <authorList>
            <person name="Chain P.S."/>
            <person name="Comerci D.J."/>
            <person name="Tolmasky M.E."/>
            <person name="Larimer F.W."/>
            <person name="Malfatti S.A."/>
            <person name="Vergez L.M."/>
            <person name="Aguero F."/>
            <person name="Land M.L."/>
            <person name="Ugalde R.A."/>
            <person name="Garcia E."/>
        </authorList>
    </citation>
    <scope>NUCLEOTIDE SEQUENCE [LARGE SCALE GENOMIC DNA]</scope>
    <source>
        <strain>2308</strain>
    </source>
</reference>
<gene>
    <name evidence="1" type="primary">cysS</name>
    <name type="ordered locus">BAB1_0697</name>
</gene>
<comment type="catalytic activity">
    <reaction evidence="1">
        <text>tRNA(Cys) + L-cysteine + ATP = L-cysteinyl-tRNA(Cys) + AMP + diphosphate</text>
        <dbReference type="Rhea" id="RHEA:17773"/>
        <dbReference type="Rhea" id="RHEA-COMP:9661"/>
        <dbReference type="Rhea" id="RHEA-COMP:9679"/>
        <dbReference type="ChEBI" id="CHEBI:30616"/>
        <dbReference type="ChEBI" id="CHEBI:33019"/>
        <dbReference type="ChEBI" id="CHEBI:35235"/>
        <dbReference type="ChEBI" id="CHEBI:78442"/>
        <dbReference type="ChEBI" id="CHEBI:78517"/>
        <dbReference type="ChEBI" id="CHEBI:456215"/>
        <dbReference type="EC" id="6.1.1.16"/>
    </reaction>
</comment>
<comment type="cofactor">
    <cofactor evidence="1">
        <name>Zn(2+)</name>
        <dbReference type="ChEBI" id="CHEBI:29105"/>
    </cofactor>
    <text evidence="1">Binds 1 zinc ion per subunit.</text>
</comment>
<comment type="subunit">
    <text evidence="1">Monomer.</text>
</comment>
<comment type="subcellular location">
    <subcellularLocation>
        <location evidence="1">Cytoplasm</location>
    </subcellularLocation>
</comment>
<comment type="similarity">
    <text evidence="1">Belongs to the class-I aminoacyl-tRNA synthetase family.</text>
</comment>
<feature type="chain" id="PRO_0000240894" description="Cysteine--tRNA ligase">
    <location>
        <begin position="1"/>
        <end position="506"/>
    </location>
</feature>
<feature type="short sequence motif" description="'HIGH' region">
    <location>
        <begin position="36"/>
        <end position="46"/>
    </location>
</feature>
<feature type="short sequence motif" description="'KMSKS' region">
    <location>
        <begin position="302"/>
        <end position="306"/>
    </location>
</feature>
<feature type="binding site" evidence="1">
    <location>
        <position position="34"/>
    </location>
    <ligand>
        <name>Zn(2+)</name>
        <dbReference type="ChEBI" id="CHEBI:29105"/>
    </ligand>
</feature>
<feature type="binding site" evidence="1">
    <location>
        <position position="230"/>
    </location>
    <ligand>
        <name>Zn(2+)</name>
        <dbReference type="ChEBI" id="CHEBI:29105"/>
    </ligand>
</feature>
<feature type="binding site" evidence="1">
    <location>
        <position position="269"/>
    </location>
    <ligand>
        <name>Zn(2+)</name>
        <dbReference type="ChEBI" id="CHEBI:29105"/>
    </ligand>
</feature>
<feature type="binding site" evidence="1">
    <location>
        <position position="273"/>
    </location>
    <ligand>
        <name>Zn(2+)</name>
        <dbReference type="ChEBI" id="CHEBI:29105"/>
    </ligand>
</feature>
<feature type="binding site" evidence="1">
    <location>
        <position position="305"/>
    </location>
    <ligand>
        <name>ATP</name>
        <dbReference type="ChEBI" id="CHEBI:30616"/>
    </ligand>
</feature>